<keyword id="KW-0539">Nucleus</keyword>
<keyword id="KW-1185">Reference proteome</keyword>
<keyword id="KW-0677">Repeat</keyword>
<keyword id="KW-0687">Ribonucleoprotein</keyword>
<keyword id="KW-0690">Ribosome biogenesis</keyword>
<keyword id="KW-0698">rRNA processing</keyword>
<keyword id="KW-0804">Transcription</keyword>
<keyword id="KW-0853">WD repeat</keyword>
<feature type="chain" id="PRO_0000307921" description="U3 small nucleolar RNA-associated protein 4">
    <location>
        <begin position="1"/>
        <end position="710"/>
    </location>
</feature>
<feature type="repeat" description="WD 1" evidence="3">
    <location>
        <begin position="11"/>
        <end position="59"/>
    </location>
</feature>
<feature type="repeat" description="WD 2" evidence="3">
    <location>
        <begin position="64"/>
        <end position="105"/>
    </location>
</feature>
<feature type="repeat" description="WD 3" evidence="3">
    <location>
        <begin position="108"/>
        <end position="147"/>
    </location>
</feature>
<feature type="repeat" description="WD 4" evidence="3">
    <location>
        <begin position="154"/>
        <end position="192"/>
    </location>
</feature>
<feature type="repeat" description="WD 5" evidence="3">
    <location>
        <begin position="199"/>
        <end position="241"/>
    </location>
</feature>
<feature type="repeat" description="WD 6" evidence="3">
    <location>
        <begin position="290"/>
        <end position="327"/>
    </location>
</feature>
<feature type="repeat" description="WD 7" evidence="3">
    <location>
        <begin position="328"/>
        <end position="365"/>
    </location>
</feature>
<feature type="repeat" description="WD 8" evidence="3">
    <location>
        <begin position="488"/>
        <end position="527"/>
    </location>
</feature>
<feature type="repeat" description="WD 9" evidence="3">
    <location>
        <begin position="529"/>
        <end position="569"/>
    </location>
</feature>
<sequence>MDIHRCRFIDYTPSAITAMAFSHKSGQNDSMPNNLLLAVGRASGNIEIWNPRNDWCLKTVLYGGVDRSIEGIVWSTGEEELRLFSIGFSTTITEWNLHTGKPLVNQDSNAGAIWSIAICDETKTLAVGCDDGSCVLFDISGGPGVIEFKRVLMRQTSRILSLDFQTKDHLVGGCADGVIKVWDLSTPNSAIISRMQVDRARKGEAALIWAVKSLRDGTIVSADSSGAVKFWNGKFFTLSQSFKLHLADALCLGVSANGDMVFSSGIDRKTIQYSREGGKREWVSNSFRRFHSHDVRCMAVFECKSLDVLISGGMDMMLAVIPVRQFNRKNHRMISAVPQRPRMAVAPKARLFMLWNDHEVLLWRIGSPGYRFLLKIVLADEENISHAAISPDGELIAISSVLRTKLYQLQYSDENVKVETVEDSFLSNIGASLLSFTVDKNKLILVSNDSEIFLIELSRLDSRQLEVFELSQPTSKKIAPRQRSNVSSMCDGICSIAVSSDGDYFAVADTVGNIFCYSLSNLTYSELPRVNTYVRAMAFRPDVRGRLAVATAGNQVYEFDVQSRKLSEWSKNNSTNMPKEFSQLLDKAFGAFFDSKHPSRFWIWSANWVSFFDLNLQLPAPRAAGKRKIEMNATVDGNLNDKKLANANSNGISNYGTGDSRCFWITHKYRPMLLVGSVGNSELLVVERPIADMLMSKSMPASFYEHKFGS</sequence>
<reference evidence="6" key="1">
    <citation type="journal article" date="2002" name="Nature">
        <title>The genome sequence of Schizosaccharomyces pombe.</title>
        <authorList>
            <person name="Wood V."/>
            <person name="Gwilliam R."/>
            <person name="Rajandream M.A."/>
            <person name="Lyne M.H."/>
            <person name="Lyne R."/>
            <person name="Stewart A."/>
            <person name="Sgouros J.G."/>
            <person name="Peat N."/>
            <person name="Hayles J."/>
            <person name="Baker S.G."/>
            <person name="Basham D."/>
            <person name="Bowman S."/>
            <person name="Brooks K."/>
            <person name="Brown D."/>
            <person name="Brown S."/>
            <person name="Chillingworth T."/>
            <person name="Churcher C.M."/>
            <person name="Collins M."/>
            <person name="Connor R."/>
            <person name="Cronin A."/>
            <person name="Davis P."/>
            <person name="Feltwell T."/>
            <person name="Fraser A."/>
            <person name="Gentles S."/>
            <person name="Goble A."/>
            <person name="Hamlin N."/>
            <person name="Harris D.E."/>
            <person name="Hidalgo J."/>
            <person name="Hodgson G."/>
            <person name="Holroyd S."/>
            <person name="Hornsby T."/>
            <person name="Howarth S."/>
            <person name="Huckle E.J."/>
            <person name="Hunt S."/>
            <person name="Jagels K."/>
            <person name="James K.D."/>
            <person name="Jones L."/>
            <person name="Jones M."/>
            <person name="Leather S."/>
            <person name="McDonald S."/>
            <person name="McLean J."/>
            <person name="Mooney P."/>
            <person name="Moule S."/>
            <person name="Mungall K.L."/>
            <person name="Murphy L.D."/>
            <person name="Niblett D."/>
            <person name="Odell C."/>
            <person name="Oliver K."/>
            <person name="O'Neil S."/>
            <person name="Pearson D."/>
            <person name="Quail M.A."/>
            <person name="Rabbinowitsch E."/>
            <person name="Rutherford K.M."/>
            <person name="Rutter S."/>
            <person name="Saunders D."/>
            <person name="Seeger K."/>
            <person name="Sharp S."/>
            <person name="Skelton J."/>
            <person name="Simmonds M.N."/>
            <person name="Squares R."/>
            <person name="Squares S."/>
            <person name="Stevens K."/>
            <person name="Taylor K."/>
            <person name="Taylor R.G."/>
            <person name="Tivey A."/>
            <person name="Walsh S.V."/>
            <person name="Warren T."/>
            <person name="Whitehead S."/>
            <person name="Woodward J.R."/>
            <person name="Volckaert G."/>
            <person name="Aert R."/>
            <person name="Robben J."/>
            <person name="Grymonprez B."/>
            <person name="Weltjens I."/>
            <person name="Vanstreels E."/>
            <person name="Rieger M."/>
            <person name="Schaefer M."/>
            <person name="Mueller-Auer S."/>
            <person name="Gabel C."/>
            <person name="Fuchs M."/>
            <person name="Duesterhoeft A."/>
            <person name="Fritzc C."/>
            <person name="Holzer E."/>
            <person name="Moestl D."/>
            <person name="Hilbert H."/>
            <person name="Borzym K."/>
            <person name="Langer I."/>
            <person name="Beck A."/>
            <person name="Lehrach H."/>
            <person name="Reinhardt R."/>
            <person name="Pohl T.M."/>
            <person name="Eger P."/>
            <person name="Zimmermann W."/>
            <person name="Wedler H."/>
            <person name="Wambutt R."/>
            <person name="Purnelle B."/>
            <person name="Goffeau A."/>
            <person name="Cadieu E."/>
            <person name="Dreano S."/>
            <person name="Gloux S."/>
            <person name="Lelaure V."/>
            <person name="Mottier S."/>
            <person name="Galibert F."/>
            <person name="Aves S.J."/>
            <person name="Xiang Z."/>
            <person name="Hunt C."/>
            <person name="Moore K."/>
            <person name="Hurst S.M."/>
            <person name="Lucas M."/>
            <person name="Rochet M."/>
            <person name="Gaillardin C."/>
            <person name="Tallada V.A."/>
            <person name="Garzon A."/>
            <person name="Thode G."/>
            <person name="Daga R.R."/>
            <person name="Cruzado L."/>
            <person name="Jimenez J."/>
            <person name="Sanchez M."/>
            <person name="del Rey F."/>
            <person name="Benito J."/>
            <person name="Dominguez A."/>
            <person name="Revuelta J.L."/>
            <person name="Moreno S."/>
            <person name="Armstrong J."/>
            <person name="Forsburg S.L."/>
            <person name="Cerutti L."/>
            <person name="Lowe T."/>
            <person name="McCombie W.R."/>
            <person name="Paulsen I."/>
            <person name="Potashkin J."/>
            <person name="Shpakovski G.V."/>
            <person name="Ussery D."/>
            <person name="Barrell B.G."/>
            <person name="Nurse P."/>
        </authorList>
    </citation>
    <scope>NUCLEOTIDE SEQUENCE [LARGE SCALE GENOMIC DNA]</scope>
    <source>
        <strain>972 / ATCC 24843</strain>
    </source>
</reference>
<reference evidence="5" key="2">
    <citation type="journal article" date="2006" name="Nat. Biotechnol.">
        <title>ORFeome cloning and global analysis of protein localization in the fission yeast Schizosaccharomyces pombe.</title>
        <authorList>
            <person name="Matsuyama A."/>
            <person name="Arai R."/>
            <person name="Yashiroda Y."/>
            <person name="Shirai A."/>
            <person name="Kamata A."/>
            <person name="Sekido S."/>
            <person name="Kobayashi Y."/>
            <person name="Hashimoto A."/>
            <person name="Hamamoto M."/>
            <person name="Hiraoka Y."/>
            <person name="Horinouchi S."/>
            <person name="Yoshida M."/>
        </authorList>
    </citation>
    <scope>SUBCELLULAR LOCATION [LARGE SCALE ANALYSIS]</scope>
</reference>
<organism>
    <name type="scientific">Schizosaccharomyces pombe (strain 972 / ATCC 24843)</name>
    <name type="common">Fission yeast</name>
    <dbReference type="NCBI Taxonomy" id="284812"/>
    <lineage>
        <taxon>Eukaryota</taxon>
        <taxon>Fungi</taxon>
        <taxon>Dikarya</taxon>
        <taxon>Ascomycota</taxon>
        <taxon>Taphrinomycotina</taxon>
        <taxon>Schizosaccharomycetes</taxon>
        <taxon>Schizosaccharomycetales</taxon>
        <taxon>Schizosaccharomycetaceae</taxon>
        <taxon>Schizosaccharomyces</taxon>
    </lineage>
</organism>
<evidence type="ECO:0000250" key="1"/>
<evidence type="ECO:0000250" key="2">
    <source>
        <dbReference type="UniProtKB" id="Q06679"/>
    </source>
</evidence>
<evidence type="ECO:0000255" key="3"/>
<evidence type="ECO:0000269" key="4">
    <source>
    </source>
</evidence>
<evidence type="ECO:0000305" key="5"/>
<evidence type="ECO:0000312" key="6">
    <source>
        <dbReference type="EMBL" id="CAA18650.1"/>
    </source>
</evidence>
<comment type="function">
    <text evidence="1">Involved in nucleolar processing of pre-18S ribosomal RNA. Required for optimal pre-ribosomal RNA transcription by RNA polymerase I together with a subset of U3 proteins required for transcription (t-UTPs) (By similarity).</text>
</comment>
<comment type="subunit">
    <text evidence="2">Component of the ribosomal small subunit (SSU) processome.</text>
</comment>
<comment type="subcellular location">
    <subcellularLocation>
        <location evidence="4">Nucleus</location>
        <location evidence="4">Nucleolus</location>
    </subcellularLocation>
</comment>
<accession>O60161</accession>
<protein>
    <recommendedName>
        <fullName>U3 small nucleolar RNA-associated protein 4</fullName>
        <shortName>U3 snoRNA-associated protein 4</shortName>
    </recommendedName>
    <alternativeName>
        <fullName>U3 protein 4 required for transcription</fullName>
    </alternativeName>
</protein>
<name>UTP4_SCHPO</name>
<gene>
    <name type="primary">utp4</name>
    <name type="ORF">SPBC19F5.02c</name>
</gene>
<proteinExistence type="inferred from homology"/>
<dbReference type="EMBL" id="CU329671">
    <property type="protein sequence ID" value="CAA18650.1"/>
    <property type="molecule type" value="Genomic_DNA"/>
</dbReference>
<dbReference type="PIR" id="T39820">
    <property type="entry name" value="T39820"/>
</dbReference>
<dbReference type="RefSeq" id="NP_596540.1">
    <property type="nucleotide sequence ID" value="NM_001022461.2"/>
</dbReference>
<dbReference type="SMR" id="O60161"/>
<dbReference type="BioGRID" id="277042">
    <property type="interactions" value="14"/>
</dbReference>
<dbReference type="FunCoup" id="O60161">
    <property type="interactions" value="593"/>
</dbReference>
<dbReference type="STRING" id="284812.O60161"/>
<dbReference type="PaxDb" id="4896-SPBC19F5.02c.1"/>
<dbReference type="EnsemblFungi" id="SPBC19F5.02c.1">
    <property type="protein sequence ID" value="SPBC19F5.02c.1:pep"/>
    <property type="gene ID" value="SPBC19F5.02c"/>
</dbReference>
<dbReference type="GeneID" id="2540514"/>
<dbReference type="KEGG" id="spo:2540514"/>
<dbReference type="PomBase" id="SPBC19F5.02c">
    <property type="gene designation" value="utp4"/>
</dbReference>
<dbReference type="VEuPathDB" id="FungiDB:SPBC19F5.02c"/>
<dbReference type="eggNOG" id="KOG2048">
    <property type="taxonomic scope" value="Eukaryota"/>
</dbReference>
<dbReference type="HOGENOM" id="CLU_002392_2_1_1"/>
<dbReference type="InParanoid" id="O60161"/>
<dbReference type="OMA" id="STYITEW"/>
<dbReference type="PhylomeDB" id="O60161"/>
<dbReference type="Reactome" id="R-SPO-6791226">
    <property type="pathway name" value="Major pathway of rRNA processing in the nucleolus and cytosol"/>
</dbReference>
<dbReference type="PRO" id="PR:O60161"/>
<dbReference type="Proteomes" id="UP000002485">
    <property type="component" value="Chromosome II"/>
</dbReference>
<dbReference type="GO" id="GO:0030686">
    <property type="term" value="C:90S preribosome"/>
    <property type="evidence" value="ECO:0007669"/>
    <property type="project" value="InterPro"/>
</dbReference>
<dbReference type="GO" id="GO:0072686">
    <property type="term" value="C:mitotic spindle"/>
    <property type="evidence" value="ECO:0007005"/>
    <property type="project" value="PomBase"/>
</dbReference>
<dbReference type="GO" id="GO:0005634">
    <property type="term" value="C:nucleus"/>
    <property type="evidence" value="ECO:0007005"/>
    <property type="project" value="PomBase"/>
</dbReference>
<dbReference type="GO" id="GO:0032040">
    <property type="term" value="C:small-subunit processome"/>
    <property type="evidence" value="ECO:0000314"/>
    <property type="project" value="PomBase"/>
</dbReference>
<dbReference type="GO" id="GO:0034455">
    <property type="term" value="C:t-UTP complex"/>
    <property type="evidence" value="ECO:0000318"/>
    <property type="project" value="GO_Central"/>
</dbReference>
<dbReference type="GO" id="GO:0030515">
    <property type="term" value="F:snoRNA binding"/>
    <property type="evidence" value="ECO:0000266"/>
    <property type="project" value="PomBase"/>
</dbReference>
<dbReference type="GO" id="GO:0000462">
    <property type="term" value="P:maturation of SSU-rRNA from tricistronic rRNA transcript (SSU-rRNA, 5.8S rRNA, LSU-rRNA)"/>
    <property type="evidence" value="ECO:0000318"/>
    <property type="project" value="GO_Central"/>
</dbReference>
<dbReference type="Gene3D" id="2.130.10.10">
    <property type="entry name" value="YVTN repeat-like/Quinoprotein amine dehydrogenase"/>
    <property type="match status" value="3"/>
</dbReference>
<dbReference type="InterPro" id="IPR011044">
    <property type="entry name" value="Quino_amine_DH_bsu"/>
</dbReference>
<dbReference type="InterPro" id="IPR046351">
    <property type="entry name" value="UTP4"/>
</dbReference>
<dbReference type="InterPro" id="IPR015943">
    <property type="entry name" value="WD40/YVTN_repeat-like_dom_sf"/>
</dbReference>
<dbReference type="InterPro" id="IPR019775">
    <property type="entry name" value="WD40_repeat_CS"/>
</dbReference>
<dbReference type="InterPro" id="IPR036322">
    <property type="entry name" value="WD40_repeat_dom_sf"/>
</dbReference>
<dbReference type="InterPro" id="IPR001680">
    <property type="entry name" value="WD40_rpt"/>
</dbReference>
<dbReference type="PANTHER" id="PTHR44163">
    <property type="entry name" value="U3 SMALL NUCLEOLAR RNA-ASSOCIATED PROTEIN 4 HOMOLOG"/>
    <property type="match status" value="1"/>
</dbReference>
<dbReference type="PANTHER" id="PTHR44163:SF1">
    <property type="entry name" value="U3 SMALL NUCLEOLAR RNA-ASSOCIATED PROTEIN 4 HOMOLOG"/>
    <property type="match status" value="1"/>
</dbReference>
<dbReference type="Pfam" id="PF00400">
    <property type="entry name" value="WD40"/>
    <property type="match status" value="2"/>
</dbReference>
<dbReference type="SMART" id="SM00320">
    <property type="entry name" value="WD40"/>
    <property type="match status" value="10"/>
</dbReference>
<dbReference type="SUPFAM" id="SSF50978">
    <property type="entry name" value="WD40 repeat-like"/>
    <property type="match status" value="1"/>
</dbReference>
<dbReference type="SUPFAM" id="SSF50969">
    <property type="entry name" value="YVTN repeat-like/Quinoprotein amine dehydrogenase"/>
    <property type="match status" value="1"/>
</dbReference>
<dbReference type="PROSITE" id="PS00678">
    <property type="entry name" value="WD_REPEATS_1"/>
    <property type="match status" value="1"/>
</dbReference>
<dbReference type="PROSITE" id="PS50082">
    <property type="entry name" value="WD_REPEATS_2"/>
    <property type="match status" value="1"/>
</dbReference>
<dbReference type="PROSITE" id="PS50294">
    <property type="entry name" value="WD_REPEATS_REGION"/>
    <property type="match status" value="1"/>
</dbReference>